<reference key="1">
    <citation type="journal article" date="2007" name="PLoS ONE">
        <title>Molecular correlates of host specialization in Staphylococcus aureus.</title>
        <authorList>
            <person name="Herron-Olson L."/>
            <person name="Fitzgerald J.R."/>
            <person name="Musser J.M."/>
            <person name="Kapur V."/>
        </authorList>
    </citation>
    <scope>NUCLEOTIDE SEQUENCE [LARGE SCALE GENOMIC DNA]</scope>
    <source>
        <strain>bovine RF122 / ET3-1</strain>
    </source>
</reference>
<name>DNAJ_STAAB</name>
<protein>
    <recommendedName>
        <fullName evidence="1">Chaperone protein DnaJ</fullName>
    </recommendedName>
</protein>
<proteinExistence type="inferred from homology"/>
<organism>
    <name type="scientific">Staphylococcus aureus (strain bovine RF122 / ET3-1)</name>
    <dbReference type="NCBI Taxonomy" id="273036"/>
    <lineage>
        <taxon>Bacteria</taxon>
        <taxon>Bacillati</taxon>
        <taxon>Bacillota</taxon>
        <taxon>Bacilli</taxon>
        <taxon>Bacillales</taxon>
        <taxon>Staphylococcaceae</taxon>
        <taxon>Staphylococcus</taxon>
    </lineage>
</organism>
<feature type="chain" id="PRO_1000085313" description="Chaperone protein DnaJ">
    <location>
        <begin position="1"/>
        <end position="379"/>
    </location>
</feature>
<feature type="domain" description="J" evidence="1">
    <location>
        <begin position="5"/>
        <end position="69"/>
    </location>
</feature>
<feature type="repeat" description="CXXCXGXG motif">
    <location>
        <begin position="149"/>
        <end position="156"/>
    </location>
</feature>
<feature type="repeat" description="CXXCXGXG motif">
    <location>
        <begin position="166"/>
        <end position="173"/>
    </location>
</feature>
<feature type="repeat" description="CXXCXGXG motif">
    <location>
        <begin position="192"/>
        <end position="199"/>
    </location>
</feature>
<feature type="repeat" description="CXXCXGXG motif">
    <location>
        <begin position="206"/>
        <end position="213"/>
    </location>
</feature>
<feature type="zinc finger region" description="CR-type" evidence="1">
    <location>
        <begin position="136"/>
        <end position="218"/>
    </location>
</feature>
<feature type="binding site" evidence="1">
    <location>
        <position position="149"/>
    </location>
    <ligand>
        <name>Zn(2+)</name>
        <dbReference type="ChEBI" id="CHEBI:29105"/>
        <label>1</label>
    </ligand>
</feature>
<feature type="binding site" evidence="1">
    <location>
        <position position="152"/>
    </location>
    <ligand>
        <name>Zn(2+)</name>
        <dbReference type="ChEBI" id="CHEBI:29105"/>
        <label>1</label>
    </ligand>
</feature>
<feature type="binding site" evidence="1">
    <location>
        <position position="166"/>
    </location>
    <ligand>
        <name>Zn(2+)</name>
        <dbReference type="ChEBI" id="CHEBI:29105"/>
        <label>2</label>
    </ligand>
</feature>
<feature type="binding site" evidence="1">
    <location>
        <position position="169"/>
    </location>
    <ligand>
        <name>Zn(2+)</name>
        <dbReference type="ChEBI" id="CHEBI:29105"/>
        <label>2</label>
    </ligand>
</feature>
<feature type="binding site" evidence="1">
    <location>
        <position position="192"/>
    </location>
    <ligand>
        <name>Zn(2+)</name>
        <dbReference type="ChEBI" id="CHEBI:29105"/>
        <label>2</label>
    </ligand>
</feature>
<feature type="binding site" evidence="1">
    <location>
        <position position="195"/>
    </location>
    <ligand>
        <name>Zn(2+)</name>
        <dbReference type="ChEBI" id="CHEBI:29105"/>
        <label>2</label>
    </ligand>
</feature>
<feature type="binding site" evidence="1">
    <location>
        <position position="206"/>
    </location>
    <ligand>
        <name>Zn(2+)</name>
        <dbReference type="ChEBI" id="CHEBI:29105"/>
        <label>1</label>
    </ligand>
</feature>
<feature type="binding site" evidence="1">
    <location>
        <position position="209"/>
    </location>
    <ligand>
        <name>Zn(2+)</name>
        <dbReference type="ChEBI" id="CHEBI:29105"/>
        <label>1</label>
    </ligand>
</feature>
<dbReference type="EMBL" id="AJ938182">
    <property type="protein sequence ID" value="CAI81140.1"/>
    <property type="molecule type" value="Genomic_DNA"/>
</dbReference>
<dbReference type="RefSeq" id="WP_001119023.1">
    <property type="nucleotide sequence ID" value="NC_007622.1"/>
</dbReference>
<dbReference type="SMR" id="Q2YT48"/>
<dbReference type="KEGG" id="sab:SAB1451c"/>
<dbReference type="HOGENOM" id="CLU_017633_0_7_9"/>
<dbReference type="GO" id="GO:0005737">
    <property type="term" value="C:cytoplasm"/>
    <property type="evidence" value="ECO:0007669"/>
    <property type="project" value="UniProtKB-SubCell"/>
</dbReference>
<dbReference type="GO" id="GO:0005524">
    <property type="term" value="F:ATP binding"/>
    <property type="evidence" value="ECO:0007669"/>
    <property type="project" value="InterPro"/>
</dbReference>
<dbReference type="GO" id="GO:0031072">
    <property type="term" value="F:heat shock protein binding"/>
    <property type="evidence" value="ECO:0007669"/>
    <property type="project" value="InterPro"/>
</dbReference>
<dbReference type="GO" id="GO:0051082">
    <property type="term" value="F:unfolded protein binding"/>
    <property type="evidence" value="ECO:0007669"/>
    <property type="project" value="UniProtKB-UniRule"/>
</dbReference>
<dbReference type="GO" id="GO:0008270">
    <property type="term" value="F:zinc ion binding"/>
    <property type="evidence" value="ECO:0007669"/>
    <property type="project" value="UniProtKB-UniRule"/>
</dbReference>
<dbReference type="GO" id="GO:0051085">
    <property type="term" value="P:chaperone cofactor-dependent protein refolding"/>
    <property type="evidence" value="ECO:0007669"/>
    <property type="project" value="TreeGrafter"/>
</dbReference>
<dbReference type="GO" id="GO:0006260">
    <property type="term" value="P:DNA replication"/>
    <property type="evidence" value="ECO:0007669"/>
    <property type="project" value="UniProtKB-KW"/>
</dbReference>
<dbReference type="GO" id="GO:0042026">
    <property type="term" value="P:protein refolding"/>
    <property type="evidence" value="ECO:0007669"/>
    <property type="project" value="TreeGrafter"/>
</dbReference>
<dbReference type="GO" id="GO:0009408">
    <property type="term" value="P:response to heat"/>
    <property type="evidence" value="ECO:0007669"/>
    <property type="project" value="InterPro"/>
</dbReference>
<dbReference type="CDD" id="cd06257">
    <property type="entry name" value="DnaJ"/>
    <property type="match status" value="1"/>
</dbReference>
<dbReference type="CDD" id="cd10747">
    <property type="entry name" value="DnaJ_C"/>
    <property type="match status" value="1"/>
</dbReference>
<dbReference type="CDD" id="cd10719">
    <property type="entry name" value="DnaJ_zf"/>
    <property type="match status" value="1"/>
</dbReference>
<dbReference type="FunFam" id="1.10.287.110:FF:000031">
    <property type="entry name" value="Molecular chaperone DnaJ"/>
    <property type="match status" value="1"/>
</dbReference>
<dbReference type="FunFam" id="2.10.230.10:FF:000002">
    <property type="entry name" value="Molecular chaperone DnaJ"/>
    <property type="match status" value="1"/>
</dbReference>
<dbReference type="FunFam" id="2.60.260.20:FF:000004">
    <property type="entry name" value="Molecular chaperone DnaJ"/>
    <property type="match status" value="1"/>
</dbReference>
<dbReference type="Gene3D" id="1.10.287.110">
    <property type="entry name" value="DnaJ domain"/>
    <property type="match status" value="1"/>
</dbReference>
<dbReference type="Gene3D" id="2.10.230.10">
    <property type="entry name" value="Heat shock protein DnaJ, cysteine-rich domain"/>
    <property type="match status" value="1"/>
</dbReference>
<dbReference type="Gene3D" id="2.60.260.20">
    <property type="entry name" value="Urease metallochaperone UreE, N-terminal domain"/>
    <property type="match status" value="2"/>
</dbReference>
<dbReference type="HAMAP" id="MF_01152">
    <property type="entry name" value="DnaJ"/>
    <property type="match status" value="1"/>
</dbReference>
<dbReference type="InterPro" id="IPR012724">
    <property type="entry name" value="DnaJ"/>
</dbReference>
<dbReference type="InterPro" id="IPR002939">
    <property type="entry name" value="DnaJ_C"/>
</dbReference>
<dbReference type="InterPro" id="IPR001623">
    <property type="entry name" value="DnaJ_domain"/>
</dbReference>
<dbReference type="InterPro" id="IPR018253">
    <property type="entry name" value="DnaJ_domain_CS"/>
</dbReference>
<dbReference type="InterPro" id="IPR008971">
    <property type="entry name" value="HSP40/DnaJ_pept-bd"/>
</dbReference>
<dbReference type="InterPro" id="IPR001305">
    <property type="entry name" value="HSP_DnaJ_Cys-rich_dom"/>
</dbReference>
<dbReference type="InterPro" id="IPR036410">
    <property type="entry name" value="HSP_DnaJ_Cys-rich_dom_sf"/>
</dbReference>
<dbReference type="InterPro" id="IPR036869">
    <property type="entry name" value="J_dom_sf"/>
</dbReference>
<dbReference type="NCBIfam" id="TIGR02349">
    <property type="entry name" value="DnaJ_bact"/>
    <property type="match status" value="1"/>
</dbReference>
<dbReference type="NCBIfam" id="NF008035">
    <property type="entry name" value="PRK10767.1"/>
    <property type="match status" value="1"/>
</dbReference>
<dbReference type="NCBIfam" id="NF010873">
    <property type="entry name" value="PRK14280.1"/>
    <property type="match status" value="1"/>
</dbReference>
<dbReference type="PANTHER" id="PTHR43096:SF48">
    <property type="entry name" value="CHAPERONE PROTEIN DNAJ"/>
    <property type="match status" value="1"/>
</dbReference>
<dbReference type="PANTHER" id="PTHR43096">
    <property type="entry name" value="DNAJ HOMOLOG 1, MITOCHONDRIAL-RELATED"/>
    <property type="match status" value="1"/>
</dbReference>
<dbReference type="Pfam" id="PF00226">
    <property type="entry name" value="DnaJ"/>
    <property type="match status" value="1"/>
</dbReference>
<dbReference type="Pfam" id="PF01556">
    <property type="entry name" value="DnaJ_C"/>
    <property type="match status" value="1"/>
</dbReference>
<dbReference type="Pfam" id="PF00684">
    <property type="entry name" value="DnaJ_CXXCXGXG"/>
    <property type="match status" value="1"/>
</dbReference>
<dbReference type="PRINTS" id="PR00625">
    <property type="entry name" value="JDOMAIN"/>
</dbReference>
<dbReference type="SMART" id="SM00271">
    <property type="entry name" value="DnaJ"/>
    <property type="match status" value="1"/>
</dbReference>
<dbReference type="SUPFAM" id="SSF46565">
    <property type="entry name" value="Chaperone J-domain"/>
    <property type="match status" value="1"/>
</dbReference>
<dbReference type="SUPFAM" id="SSF57938">
    <property type="entry name" value="DnaJ/Hsp40 cysteine-rich domain"/>
    <property type="match status" value="1"/>
</dbReference>
<dbReference type="SUPFAM" id="SSF49493">
    <property type="entry name" value="HSP40/DnaJ peptide-binding domain"/>
    <property type="match status" value="2"/>
</dbReference>
<dbReference type="PROSITE" id="PS00636">
    <property type="entry name" value="DNAJ_1"/>
    <property type="match status" value="1"/>
</dbReference>
<dbReference type="PROSITE" id="PS50076">
    <property type="entry name" value="DNAJ_2"/>
    <property type="match status" value="1"/>
</dbReference>
<dbReference type="PROSITE" id="PS51188">
    <property type="entry name" value="ZF_CR"/>
    <property type="match status" value="1"/>
</dbReference>
<accession>Q2YT48</accession>
<evidence type="ECO:0000255" key="1">
    <source>
        <dbReference type="HAMAP-Rule" id="MF_01152"/>
    </source>
</evidence>
<keyword id="KW-0143">Chaperone</keyword>
<keyword id="KW-0963">Cytoplasm</keyword>
<keyword id="KW-0235">DNA replication</keyword>
<keyword id="KW-0479">Metal-binding</keyword>
<keyword id="KW-0677">Repeat</keyword>
<keyword id="KW-0346">Stress response</keyword>
<keyword id="KW-0862">Zinc</keyword>
<keyword id="KW-0863">Zinc-finger</keyword>
<sequence length="379" mass="41750">MAKRDYYEVLGISKDASKDEIKKAYRKLSKKYHPDINKEEGADEKFKEISEAYEVLSDDNKRASYDQFGHDGPQGFGGQGFNGSDFGGFSGFGGGGFEDIFSSFFGGGRQRDPNASQKGDDLQYTMTLTFEEAVFGTTKEISIRKDVTCETCHGDGAKPGTSKKTCSYCNGAGHVAVEQNTILGRVRTEQVCPKCNGSGQEFEEACPTCHGKGTENKTVKLEVKVPEGVDNEQQIRLAGEGSPGVNGGPAGDLYVVFRVKPSETFKRDGDDIYYKLNVSFPQAALGDEIKIPTLNNEVMLTIPAGTQTGKQFRLKEKGIKNVHGYGYGDLYVDIKVVTPTKLTDRQKELMKEFAQLNGEEINEQPSNFKDRAKRFFKGE</sequence>
<gene>
    <name evidence="1" type="primary">dnaJ</name>
    <name type="ordered locus">SAB1451c</name>
</gene>
<comment type="function">
    <text evidence="1">Participates actively in the response to hyperosmotic and heat shock by preventing the aggregation of stress-denatured proteins and by disaggregating proteins, also in an autonomous, DnaK-independent fashion. Unfolded proteins bind initially to DnaJ; upon interaction with the DnaJ-bound protein, DnaK hydrolyzes its bound ATP, resulting in the formation of a stable complex. GrpE releases ADP from DnaK; ATP binding to DnaK triggers the release of the substrate protein, thus completing the reaction cycle. Several rounds of ATP-dependent interactions between DnaJ, DnaK and GrpE are required for fully efficient folding. Also involved, together with DnaK and GrpE, in the DNA replication of plasmids through activation of initiation proteins.</text>
</comment>
<comment type="cofactor">
    <cofactor evidence="1">
        <name>Zn(2+)</name>
        <dbReference type="ChEBI" id="CHEBI:29105"/>
    </cofactor>
    <text evidence="1">Binds 2 Zn(2+) ions per monomer.</text>
</comment>
<comment type="subunit">
    <text evidence="1">Homodimer.</text>
</comment>
<comment type="subcellular location">
    <subcellularLocation>
        <location evidence="1">Cytoplasm</location>
    </subcellularLocation>
</comment>
<comment type="domain">
    <text evidence="1">The J domain is necessary and sufficient to stimulate DnaK ATPase activity. Zinc center 1 plays an important role in the autonomous, DnaK-independent chaperone activity of DnaJ. Zinc center 2 is essential for interaction with DnaK and for DnaJ activity.</text>
</comment>
<comment type="similarity">
    <text evidence="1">Belongs to the DnaJ family.</text>
</comment>